<protein>
    <recommendedName>
        <fullName>Progonadoliberin-2</fullName>
    </recommendedName>
    <alternativeName>
        <fullName>Progonadoliberin II</fullName>
    </alternativeName>
    <component>
        <recommendedName>
            <fullName>Gonadoliberin-2</fullName>
        </recommendedName>
        <alternativeName>
            <fullName>Gonadoliberin II</fullName>
        </alternativeName>
        <alternativeName>
            <fullName>Gonadotropin-releasing hormone II</fullName>
            <shortName>GnRH II</shortName>
        </alternativeName>
        <alternativeName>
            <fullName>LHRH II</fullName>
        </alternativeName>
        <alternativeName>
            <fullName>Luliberin II</fullName>
        </alternativeName>
        <alternativeName>
            <fullName>Luteinizing hormone-releasing hormone II</fullName>
        </alternativeName>
    </component>
    <component>
        <recommendedName>
            <fullName>GnRH-associated peptide 2</fullName>
        </recommendedName>
        <alternativeName>
            <fullName>GAP2</fullName>
        </alternativeName>
        <alternativeName>
            <fullName>GnRH-associated peptide II</fullName>
        </alternativeName>
    </component>
</protein>
<name>GON2_AQUCT</name>
<keyword id="KW-0025">Alternative splicing</keyword>
<keyword id="KW-0027">Amidation</keyword>
<keyword id="KW-0165">Cleavage on pair of basic residues</keyword>
<keyword id="KW-0372">Hormone</keyword>
<keyword id="KW-0873">Pyrrolidone carboxylic acid</keyword>
<keyword id="KW-0964">Secreted</keyword>
<keyword id="KW-0732">Signal</keyword>
<accession>Q9DG36</accession>
<accession>Q90Y64</accession>
<proteinExistence type="evidence at transcript level"/>
<comment type="function">
    <text evidence="4 7">Stimulates the secretion of gonadotropins.</text>
</comment>
<comment type="subcellular location">
    <subcellularLocation>
        <location evidence="2">Secreted</location>
    </subcellularLocation>
</comment>
<comment type="alternative products">
    <event type="alternative splicing"/>
    <isoform>
        <id>Q9DG36-1</id>
        <name evidence="5">1</name>
        <sequence type="displayed"/>
    </isoform>
    <isoform>
        <id>Q9DG36-2</id>
        <name evidence="5">2</name>
        <sequence type="described" ref="VSP_050476"/>
    </isoform>
</comment>
<comment type="tissue specificity">
    <text evidence="5">Midbrain and hindbrain.</text>
</comment>
<comment type="developmental stage">
    <text evidence="5">Expressed at significantly higher levels during hibernation and post-breeding. Not expressed in pituitary.</text>
</comment>
<comment type="similarity">
    <text evidence="7">Belongs to the GnRH family.</text>
</comment>
<feature type="signal peptide" evidence="3">
    <location>
        <begin position="1"/>
        <end position="24"/>
    </location>
</feature>
<feature type="chain" id="PRO_0000012547" description="Progonadoliberin-2">
    <location>
        <begin position="25"/>
        <end position="93"/>
    </location>
</feature>
<feature type="peptide" id="PRO_0000012548" description="Gonadoliberin-2">
    <location>
        <begin position="25"/>
        <end position="34"/>
    </location>
</feature>
<feature type="peptide" id="PRO_0000012549" description="GnRH-associated peptide 2">
    <location>
        <begin position="38"/>
        <end position="93"/>
    </location>
</feature>
<feature type="modified residue" description="Pyrrolidone carboxylic acid" evidence="1">
    <location>
        <position position="25"/>
    </location>
</feature>
<feature type="modified residue" description="Glycine amide" evidence="1">
    <location>
        <position position="34"/>
    </location>
</feature>
<feature type="splice variant" id="VSP_050476" description="In isoform 2." evidence="6">
    <location>
        <begin position="75"/>
        <end position="82"/>
    </location>
</feature>
<evidence type="ECO:0000250" key="1"/>
<evidence type="ECO:0000250" key="2">
    <source>
        <dbReference type="UniProtKB" id="P51925"/>
    </source>
</evidence>
<evidence type="ECO:0000255" key="3"/>
<evidence type="ECO:0000255" key="4">
    <source>
        <dbReference type="RuleBase" id="RU000635"/>
    </source>
</evidence>
<evidence type="ECO:0000269" key="5">
    <source>
    </source>
</evidence>
<evidence type="ECO:0000303" key="6">
    <source>
    </source>
</evidence>
<evidence type="ECO:0000305" key="7"/>
<evidence type="ECO:0000312" key="8">
    <source>
        <dbReference type="EMBL" id="AAG21894.1"/>
    </source>
</evidence>
<organism evidence="8">
    <name type="scientific">Aquarana catesbeiana</name>
    <name type="common">American bullfrog</name>
    <name type="synonym">Rana catesbeiana</name>
    <dbReference type="NCBI Taxonomy" id="8400"/>
    <lineage>
        <taxon>Eukaryota</taxon>
        <taxon>Metazoa</taxon>
        <taxon>Chordata</taxon>
        <taxon>Craniata</taxon>
        <taxon>Vertebrata</taxon>
        <taxon>Euteleostomi</taxon>
        <taxon>Amphibia</taxon>
        <taxon>Batrachia</taxon>
        <taxon>Anura</taxon>
        <taxon>Neobatrachia</taxon>
        <taxon>Ranoidea</taxon>
        <taxon>Ranidae</taxon>
        <taxon>Aquarana</taxon>
    </lineage>
</organism>
<reference evidence="7" key="1">
    <citation type="journal article" date="2001" name="J. Exp. Zool.">
        <title>Cloning and characterization of cDNAs encoding the GnRH1 and GnRH2 precursors from bullfrog (Rana catesbeiana).</title>
        <authorList>
            <person name="Wang L."/>
            <person name="Yoo M.S."/>
            <person name="Kang H.M."/>
            <person name="Im W.B."/>
            <person name="Choi H.S."/>
            <person name="Bogerd J."/>
            <person name="Kwon H.B."/>
        </authorList>
    </citation>
    <scope>NUCLEOTIDE SEQUENCE [MRNA] (ISOFORMS 1 AND 2)</scope>
    <scope>TISSUE SPECIFICITY</scope>
    <scope>DEVELOPMENTAL STAGE</scope>
    <source>
        <tissue>Hindbrain</tissue>
        <tissue>Midbrain</tissue>
    </source>
</reference>
<dbReference type="EMBL" id="AF192464">
    <property type="protein sequence ID" value="AAG21894.1"/>
    <property type="molecule type" value="mRNA"/>
</dbReference>
<dbReference type="EMBL" id="AF186096">
    <property type="protein sequence ID" value="AAL05971.1"/>
    <property type="molecule type" value="mRNA"/>
</dbReference>
<dbReference type="SMR" id="Q9DG36"/>
<dbReference type="GO" id="GO:0005615">
    <property type="term" value="C:extracellular space"/>
    <property type="evidence" value="ECO:0000250"/>
    <property type="project" value="UniProtKB"/>
</dbReference>
<dbReference type="GO" id="GO:0005183">
    <property type="term" value="F:gonadotropin hormone-releasing hormone activity"/>
    <property type="evidence" value="ECO:0000303"/>
    <property type="project" value="UniProtKB"/>
</dbReference>
<dbReference type="GO" id="GO:0031530">
    <property type="term" value="F:gonadotropin-releasing hormone receptor binding"/>
    <property type="evidence" value="ECO:0007669"/>
    <property type="project" value="TreeGrafter"/>
</dbReference>
<dbReference type="GO" id="GO:0009755">
    <property type="term" value="P:hormone-mediated signaling pathway"/>
    <property type="evidence" value="ECO:0000303"/>
    <property type="project" value="UniProtKB"/>
</dbReference>
<dbReference type="GO" id="GO:0022414">
    <property type="term" value="P:reproductive process"/>
    <property type="evidence" value="ECO:0000303"/>
    <property type="project" value="UniProtKB"/>
</dbReference>
<dbReference type="InterPro" id="IPR002012">
    <property type="entry name" value="GnRH"/>
</dbReference>
<dbReference type="InterPro" id="IPR019792">
    <property type="entry name" value="Gonadoliberin"/>
</dbReference>
<dbReference type="PANTHER" id="PTHR10522">
    <property type="entry name" value="GONADOLIBERIN"/>
    <property type="match status" value="1"/>
</dbReference>
<dbReference type="PANTHER" id="PTHR10522:SF8">
    <property type="entry name" value="PROGONADOLIBERIN"/>
    <property type="match status" value="1"/>
</dbReference>
<dbReference type="Pfam" id="PF00446">
    <property type="entry name" value="GnRH"/>
    <property type="match status" value="1"/>
</dbReference>
<dbReference type="PROSITE" id="PS00473">
    <property type="entry name" value="GNRH"/>
    <property type="match status" value="1"/>
</dbReference>
<sequence>MACQRHLLFLLLVLFAVSTQLSHGQHWSHGWYPGGKRELDMPASPEVSEEIKLCEGEECAYLRNPRKNLLKNILGRSNQKKNADVLARQLQKK</sequence>
<gene>
    <name type="primary">gnrh2</name>
</gene>